<name>MAB21_CAEBR</name>
<keyword id="KW-0217">Developmental protein</keyword>
<keyword id="KW-0221">Differentiation</keyword>
<keyword id="KW-1185">Reference proteome</keyword>
<reference key="1">
    <citation type="journal article" date="2001" name="Dev. Dyn.">
        <title>Postembryonic expression of Caenorhabditis elegans mab-21 and its requirement in sensory ray differentiation.</title>
        <authorList>
            <person name="Ho S.H."/>
            <person name="So G.M.K."/>
            <person name="Chow K.L."/>
        </authorList>
    </citation>
    <scope>NUCLEOTIDE SEQUENCE [GENOMIC DNA]</scope>
    <source>
        <strain>AF16</strain>
    </source>
</reference>
<reference key="2">
    <citation type="journal article" date="2003" name="PLoS Biol.">
        <title>The genome sequence of Caenorhabditis briggsae: a platform for comparative genomics.</title>
        <authorList>
            <person name="Stein L.D."/>
            <person name="Bao Z."/>
            <person name="Blasiar D."/>
            <person name="Blumenthal T."/>
            <person name="Brent M.R."/>
            <person name="Chen N."/>
            <person name="Chinwalla A."/>
            <person name="Clarke L."/>
            <person name="Clee C."/>
            <person name="Coghlan A."/>
            <person name="Coulson A."/>
            <person name="D'Eustachio P."/>
            <person name="Fitch D.H.A."/>
            <person name="Fulton L.A."/>
            <person name="Fulton R.E."/>
            <person name="Griffiths-Jones S."/>
            <person name="Harris T.W."/>
            <person name="Hillier L.W."/>
            <person name="Kamath R."/>
            <person name="Kuwabara P.E."/>
            <person name="Mardis E.R."/>
            <person name="Marra M.A."/>
            <person name="Miner T.L."/>
            <person name="Minx P."/>
            <person name="Mullikin J.C."/>
            <person name="Plumb R.W."/>
            <person name="Rogers J."/>
            <person name="Schein J.E."/>
            <person name="Sohrmann M."/>
            <person name="Spieth J."/>
            <person name="Stajich J.E."/>
            <person name="Wei C."/>
            <person name="Willey D."/>
            <person name="Wilson R.K."/>
            <person name="Durbin R.M."/>
            <person name="Waterston R.H."/>
        </authorList>
    </citation>
    <scope>NUCLEOTIDE SEQUENCE [LARGE SCALE GENOMIC DNA]</scope>
    <source>
        <strain>AF16</strain>
    </source>
</reference>
<gene>
    <name type="primary">mab-21</name>
    <name type="ORF">CBG18030</name>
</gene>
<comment type="function">
    <text evidence="1">Acts in a cell autonomous fashion to specify the properties of the sensory ray and non-autonomously in the choice of hypodermal versus neuroblast cell fate.</text>
</comment>
<comment type="similarity">
    <text evidence="2">Belongs to the mab-21 family.</text>
</comment>
<sequence length="364" mass="41568">MLGHNQNVVYQVNTFYNEKVQQRKARVTKNVHRIAKVVQEILKEVEAQEPRFINTLTETSTGRFDGIVVHSPSEYEAVLYLNQMGVFNFVDDGTIQGCAVLKLSDGRKRSMSLWVEFITASGYLSARKIRHRFQNIVAQVLQTPQFSEYCKLLQDNTDVRVRVDDKYTVQITCAFRCNGIWPRSASHWPLAGLPWPNTALANQTKAEGFDLTSRETAITQHNNPNKQASTMEADAWAMKMHGAENMLLTGGRQKTLSILKCLRDAHMDFPGTPVTNYILKTLVLYECEKHCSEYEWEDTNIGDRLVGVLLQLVSCLQCRRCAHYFLPSLDLLRAKPTHTIEHSAKLTWHLVRKLMIDPNALQTL</sequence>
<evidence type="ECO:0000250" key="1"/>
<evidence type="ECO:0000305" key="2"/>
<proteinExistence type="inferred from homology"/>
<dbReference type="EMBL" id="AF299247">
    <property type="protein sequence ID" value="AAG36973.1"/>
    <property type="molecule type" value="Genomic_DNA"/>
</dbReference>
<dbReference type="EMBL" id="HE600963">
    <property type="protein sequence ID" value="CAP35557.2"/>
    <property type="molecule type" value="Genomic_DNA"/>
</dbReference>
<dbReference type="SMR" id="Q9GQ38"/>
<dbReference type="FunCoup" id="Q9GQ38">
    <property type="interactions" value="286"/>
</dbReference>
<dbReference type="STRING" id="6238.Q9GQ38"/>
<dbReference type="EnsemblMetazoa" id="CBG18030.1">
    <property type="protein sequence ID" value="CBG18030.1"/>
    <property type="gene ID" value="WBGene00037527"/>
</dbReference>
<dbReference type="WormBase" id="CBG18030">
    <property type="protein sequence ID" value="CBP37045"/>
    <property type="gene ID" value="WBGene00037527"/>
    <property type="gene designation" value="Cbr-mab-21"/>
</dbReference>
<dbReference type="eggNOG" id="KOG3963">
    <property type="taxonomic scope" value="Eukaryota"/>
</dbReference>
<dbReference type="HOGENOM" id="CLU_045315_0_0_1"/>
<dbReference type="InParanoid" id="Q9GQ38"/>
<dbReference type="OMA" id="RESIYMK"/>
<dbReference type="Proteomes" id="UP000008549">
    <property type="component" value="Unassembled WGS sequence"/>
</dbReference>
<dbReference type="GO" id="GO:0045165">
    <property type="term" value="P:cell fate commitment"/>
    <property type="evidence" value="ECO:0007669"/>
    <property type="project" value="EnsemblMetazoa"/>
</dbReference>
<dbReference type="GO" id="GO:0009792">
    <property type="term" value="P:embryo development ending in birth or egg hatching"/>
    <property type="evidence" value="ECO:0007669"/>
    <property type="project" value="EnsemblMetazoa"/>
</dbReference>
<dbReference type="GO" id="GO:0090597">
    <property type="term" value="P:nematode male tail mating organ morphogenesis"/>
    <property type="evidence" value="ECO:0007669"/>
    <property type="project" value="EnsemblMetazoa"/>
</dbReference>
<dbReference type="FunFam" id="1.10.1410.40:FF:000002">
    <property type="entry name" value="protein mab-21-like 1"/>
    <property type="match status" value="1"/>
</dbReference>
<dbReference type="Gene3D" id="1.10.1410.40">
    <property type="match status" value="1"/>
</dbReference>
<dbReference type="Gene3D" id="3.30.460.90">
    <property type="match status" value="1"/>
</dbReference>
<dbReference type="InterPro" id="IPR046903">
    <property type="entry name" value="Mab-21-like_nuc_Trfase"/>
</dbReference>
<dbReference type="InterPro" id="IPR046906">
    <property type="entry name" value="Mab-21_HhH/H2TH-like"/>
</dbReference>
<dbReference type="InterPro" id="IPR024810">
    <property type="entry name" value="MAB21L/cGLR"/>
</dbReference>
<dbReference type="PANTHER" id="PTHR10656">
    <property type="entry name" value="CELL FATE DETERMINING PROTEIN MAB21-RELATED"/>
    <property type="match status" value="1"/>
</dbReference>
<dbReference type="PANTHER" id="PTHR10656:SF70">
    <property type="entry name" value="PROTEIN MAB-21-RELATED"/>
    <property type="match status" value="1"/>
</dbReference>
<dbReference type="Pfam" id="PF03281">
    <property type="entry name" value="Mab-21"/>
    <property type="match status" value="1"/>
</dbReference>
<dbReference type="Pfam" id="PF20266">
    <property type="entry name" value="Mab-21_C"/>
    <property type="match status" value="1"/>
</dbReference>
<dbReference type="SMART" id="SM01265">
    <property type="entry name" value="Mab-21"/>
    <property type="match status" value="1"/>
</dbReference>
<protein>
    <recommendedName>
        <fullName>Protein male abnormal 21</fullName>
    </recommendedName>
</protein>
<feature type="chain" id="PRO_0000312801" description="Protein male abnormal 21">
    <location>
        <begin position="1"/>
        <end position="364"/>
    </location>
</feature>
<organism>
    <name type="scientific">Caenorhabditis briggsae</name>
    <dbReference type="NCBI Taxonomy" id="6238"/>
    <lineage>
        <taxon>Eukaryota</taxon>
        <taxon>Metazoa</taxon>
        <taxon>Ecdysozoa</taxon>
        <taxon>Nematoda</taxon>
        <taxon>Chromadorea</taxon>
        <taxon>Rhabditida</taxon>
        <taxon>Rhabditina</taxon>
        <taxon>Rhabditomorpha</taxon>
        <taxon>Rhabditoidea</taxon>
        <taxon>Rhabditidae</taxon>
        <taxon>Peloderinae</taxon>
        <taxon>Caenorhabditis</taxon>
    </lineage>
</organism>
<accession>Q9GQ38</accession>
<accession>A8XSV4</accession>
<accession>Q60YZ0</accession>